<proteinExistence type="evidence at transcript level"/>
<gene>
    <name type="primary">RpL17</name>
</gene>
<feature type="chain" id="PRO_0000323416" description="Large ribosomal subunit protein uL22">
    <location>
        <begin position="1"/>
        <end position="187"/>
    </location>
</feature>
<feature type="region of interest" description="Disordered" evidence="1">
    <location>
        <begin position="155"/>
        <end position="187"/>
    </location>
</feature>
<feature type="compositionally biased region" description="Basic residues" evidence="1">
    <location>
        <begin position="169"/>
        <end position="178"/>
    </location>
</feature>
<evidence type="ECO:0000256" key="1">
    <source>
        <dbReference type="SAM" id="MobiDB-lite"/>
    </source>
</evidence>
<evidence type="ECO:0000305" key="2"/>
<dbReference type="EMBL" id="AY829855">
    <property type="protein sequence ID" value="AAV91469.1"/>
    <property type="molecule type" value="mRNA"/>
</dbReference>
<dbReference type="SMR" id="Q5MGD1"/>
<dbReference type="GO" id="GO:0022625">
    <property type="term" value="C:cytosolic large ribosomal subunit"/>
    <property type="evidence" value="ECO:0007669"/>
    <property type="project" value="TreeGrafter"/>
</dbReference>
<dbReference type="GO" id="GO:0003735">
    <property type="term" value="F:structural constituent of ribosome"/>
    <property type="evidence" value="ECO:0007669"/>
    <property type="project" value="InterPro"/>
</dbReference>
<dbReference type="GO" id="GO:0002181">
    <property type="term" value="P:cytoplasmic translation"/>
    <property type="evidence" value="ECO:0007669"/>
    <property type="project" value="TreeGrafter"/>
</dbReference>
<dbReference type="CDD" id="cd00336">
    <property type="entry name" value="Ribosomal_L22"/>
    <property type="match status" value="1"/>
</dbReference>
<dbReference type="FunFam" id="3.90.470.10:FF:000003">
    <property type="entry name" value="60S ribosomal protein L17"/>
    <property type="match status" value="1"/>
</dbReference>
<dbReference type="Gene3D" id="3.90.470.10">
    <property type="entry name" value="Ribosomal protein L22/L17"/>
    <property type="match status" value="1"/>
</dbReference>
<dbReference type="InterPro" id="IPR001063">
    <property type="entry name" value="Ribosomal_uL22"/>
</dbReference>
<dbReference type="InterPro" id="IPR018260">
    <property type="entry name" value="Ribosomal_uL22_CS"/>
</dbReference>
<dbReference type="InterPro" id="IPR005721">
    <property type="entry name" value="Ribosomal_uL22_euk/arc"/>
</dbReference>
<dbReference type="InterPro" id="IPR036394">
    <property type="entry name" value="Ribosomal_uL22_sf"/>
</dbReference>
<dbReference type="NCBIfam" id="TIGR01038">
    <property type="entry name" value="uL22_arch_euk"/>
    <property type="match status" value="1"/>
</dbReference>
<dbReference type="PANTHER" id="PTHR11593">
    <property type="entry name" value="60S RIBOSOMAL PROTEIN L17"/>
    <property type="match status" value="1"/>
</dbReference>
<dbReference type="PANTHER" id="PTHR11593:SF10">
    <property type="entry name" value="60S RIBOSOMAL PROTEIN L17"/>
    <property type="match status" value="1"/>
</dbReference>
<dbReference type="Pfam" id="PF00237">
    <property type="entry name" value="Ribosomal_L22"/>
    <property type="match status" value="1"/>
</dbReference>
<dbReference type="SUPFAM" id="SSF54843">
    <property type="entry name" value="Ribosomal protein L22"/>
    <property type="match status" value="1"/>
</dbReference>
<dbReference type="PROSITE" id="PS00464">
    <property type="entry name" value="RIBOSOMAL_L22"/>
    <property type="match status" value="1"/>
</dbReference>
<name>RL17_LONON</name>
<sequence length="187" mass="21531">MGRYSRDPENPAKSCKARGSNLRVHFKNTYETAMAIRKMPLRRAVRYLKNVTEKKECIPFRRFNGGVGRCAQAKQFGTTQGRWPKKSAEFPLQLLRNAESNADYKGLDVDRLVIDHIQVNRAPCLRRRTYRAHGRINPYMSSPCHIEVALSEREDAVSRAAPTDDAPAKKKLSKKKLARQKEKMMRE</sequence>
<keyword id="KW-0687">Ribonucleoprotein</keyword>
<keyword id="KW-0689">Ribosomal protein</keyword>
<comment type="similarity">
    <text evidence="2">Belongs to the universal ribosomal protein uL22 family.</text>
</comment>
<accession>Q5MGD1</accession>
<protein>
    <recommendedName>
        <fullName evidence="2">Large ribosomal subunit protein uL22</fullName>
    </recommendedName>
    <alternativeName>
        <fullName>60S ribosomal protein L17</fullName>
    </alternativeName>
</protein>
<organism>
    <name type="scientific">Lonomia obliqua</name>
    <name type="common">Moth</name>
    <dbReference type="NCBI Taxonomy" id="304329"/>
    <lineage>
        <taxon>Eukaryota</taxon>
        <taxon>Metazoa</taxon>
        <taxon>Ecdysozoa</taxon>
        <taxon>Arthropoda</taxon>
        <taxon>Hexapoda</taxon>
        <taxon>Insecta</taxon>
        <taxon>Pterygota</taxon>
        <taxon>Neoptera</taxon>
        <taxon>Endopterygota</taxon>
        <taxon>Lepidoptera</taxon>
        <taxon>Glossata</taxon>
        <taxon>Ditrysia</taxon>
        <taxon>Bombycoidea</taxon>
        <taxon>Saturniidae</taxon>
        <taxon>Hemileucinae</taxon>
        <taxon>Lonomia</taxon>
    </lineage>
</organism>
<reference key="1">
    <citation type="journal article" date="2005" name="Gene">
        <title>A catalog for the transcripts from the venomous structures of the caterpillar Lonomia obliqua: identification of the proteins potentially involved in the coagulation disorder and hemorrhagic syndrome.</title>
        <authorList>
            <person name="Veiga A.B.G."/>
            <person name="Ribeiro J.M.C."/>
            <person name="Guimaraes J.A."/>
            <person name="Francischetti I.M.B."/>
        </authorList>
    </citation>
    <scope>NUCLEOTIDE SEQUENCE [LARGE SCALE MRNA]</scope>
    <source>
        <tissue>Spicule</tissue>
    </source>
</reference>